<comment type="function">
    <text evidence="1">Catalyzes the conversion of L-arabinose to L-ribulose.</text>
</comment>
<comment type="catalytic activity">
    <reaction evidence="1">
        <text>beta-L-arabinopyranose = L-ribulose</text>
        <dbReference type="Rhea" id="RHEA:14821"/>
        <dbReference type="ChEBI" id="CHEBI:16880"/>
        <dbReference type="ChEBI" id="CHEBI:40886"/>
        <dbReference type="EC" id="5.3.1.4"/>
    </reaction>
</comment>
<comment type="cofactor">
    <cofactor evidence="1">
        <name>Mn(2+)</name>
        <dbReference type="ChEBI" id="CHEBI:29035"/>
    </cofactor>
    <text evidence="1">Binds 1 Mn(2+) ion per subunit.</text>
</comment>
<comment type="pathway">
    <text evidence="1">Carbohydrate degradation; L-arabinose degradation via L-ribulose; D-xylulose 5-phosphate from L-arabinose (bacterial route): step 1/3.</text>
</comment>
<comment type="subunit">
    <text evidence="1">Homohexamer.</text>
</comment>
<comment type="similarity">
    <text evidence="1">Belongs to the arabinose isomerase family.</text>
</comment>
<sequence length="500" mass="55608">MDVFKQSEVWFVIGSQNLYGPKTLQQVMDNAHQVVNSLNNEAGLPVKLVLKPLVTTPDEITALCREANYDTACIGIMTWLHTFSPAKMWIGGLSILNKPLLQFHTQFNAQIPWKTMDMDFMNLNHTAHGGREFGFIGARMRQQHSVITGHWQDKEAHQRIGQWMRVAAAKQESQQLKVARFGDNMREVAVTEGDKVAAQIQFGYSVNAYGIGDLVAVVDAVSKGDIDTLVEEYEATYRFTDAVKLNGDKRENLLDAARIELGMTRFLEQGGFKAFTTNFENLYGLKQLPGLAVQRLMQQGYGFGGEGDWKTAALLRILKVMGTGLKGGTSFMEDYTYNFQPGNDLVVGSHMLEVCPSIAKEEKPLLDVQHLGIGGKADPARLIFSTPAGPALNASLIDMGNRFRLLVNVVDTVEQPHPLPKLPVARAIWQAQPSLATAAEAWIIAGGAHHTVFSQAVGVDELRLYAEMHGIEFLLIDNDTTLPAFKNEIRWNEVYYQLNR</sequence>
<proteinExistence type="inferred from homology"/>
<evidence type="ECO:0000255" key="1">
    <source>
        <dbReference type="HAMAP-Rule" id="MF_00519"/>
    </source>
</evidence>
<gene>
    <name evidence="1" type="primary">araA</name>
    <name type="ordered locus">YPN_1722</name>
    <name type="ORF">YP516_1913</name>
</gene>
<protein>
    <recommendedName>
        <fullName evidence="1">L-arabinose isomerase</fullName>
        <ecNumber evidence="1">5.3.1.4</ecNumber>
    </recommendedName>
</protein>
<name>ARAA_YERPN</name>
<dbReference type="EC" id="5.3.1.4" evidence="1"/>
<dbReference type="EMBL" id="CP000305">
    <property type="protein sequence ID" value="ABG18051.1"/>
    <property type="molecule type" value="Genomic_DNA"/>
</dbReference>
<dbReference type="EMBL" id="ACNQ01000009">
    <property type="protein sequence ID" value="EEO77178.1"/>
    <property type="molecule type" value="Genomic_DNA"/>
</dbReference>
<dbReference type="RefSeq" id="WP_002228461.1">
    <property type="nucleotide sequence ID" value="NZ_ACNQ01000009.1"/>
</dbReference>
<dbReference type="SMR" id="Q1CIX9"/>
<dbReference type="KEGG" id="ypn:YPN_1722"/>
<dbReference type="HOGENOM" id="CLU_045663_0_0_6"/>
<dbReference type="UniPathway" id="UPA00145">
    <property type="reaction ID" value="UER00565"/>
</dbReference>
<dbReference type="Proteomes" id="UP000008936">
    <property type="component" value="Chromosome"/>
</dbReference>
<dbReference type="GO" id="GO:0005829">
    <property type="term" value="C:cytosol"/>
    <property type="evidence" value="ECO:0007669"/>
    <property type="project" value="TreeGrafter"/>
</dbReference>
<dbReference type="GO" id="GO:0008733">
    <property type="term" value="F:L-arabinose isomerase activity"/>
    <property type="evidence" value="ECO:0007669"/>
    <property type="project" value="UniProtKB-UniRule"/>
</dbReference>
<dbReference type="GO" id="GO:0030145">
    <property type="term" value="F:manganese ion binding"/>
    <property type="evidence" value="ECO:0007669"/>
    <property type="project" value="UniProtKB-UniRule"/>
</dbReference>
<dbReference type="GO" id="GO:0019569">
    <property type="term" value="P:L-arabinose catabolic process to xylulose 5-phosphate"/>
    <property type="evidence" value="ECO:0007669"/>
    <property type="project" value="UniProtKB-UniRule"/>
</dbReference>
<dbReference type="CDD" id="cd03557">
    <property type="entry name" value="L-arabinose_isomerase"/>
    <property type="match status" value="1"/>
</dbReference>
<dbReference type="FunFam" id="3.40.50.10940:FF:000001">
    <property type="entry name" value="L-arabinose isomerase"/>
    <property type="match status" value="1"/>
</dbReference>
<dbReference type="Gene3D" id="3.40.50.10940">
    <property type="match status" value="1"/>
</dbReference>
<dbReference type="HAMAP" id="MF_00519">
    <property type="entry name" value="Arabinose_Isome"/>
    <property type="match status" value="1"/>
</dbReference>
<dbReference type="InterPro" id="IPR024664">
    <property type="entry name" value="Ara_Isoase_C"/>
</dbReference>
<dbReference type="InterPro" id="IPR055390">
    <property type="entry name" value="AraA_central"/>
</dbReference>
<dbReference type="InterPro" id="IPR055389">
    <property type="entry name" value="AraA_N"/>
</dbReference>
<dbReference type="InterPro" id="IPR038583">
    <property type="entry name" value="AraA_N_sf"/>
</dbReference>
<dbReference type="InterPro" id="IPR004216">
    <property type="entry name" value="Fuc/Ara_isomerase_C"/>
</dbReference>
<dbReference type="InterPro" id="IPR009015">
    <property type="entry name" value="Fucose_isomerase_N/cen_sf"/>
</dbReference>
<dbReference type="InterPro" id="IPR003762">
    <property type="entry name" value="Lara_isomerase"/>
</dbReference>
<dbReference type="NCBIfam" id="NF002795">
    <property type="entry name" value="PRK02929.1"/>
    <property type="match status" value="1"/>
</dbReference>
<dbReference type="PANTHER" id="PTHR38464">
    <property type="entry name" value="L-ARABINOSE ISOMERASE"/>
    <property type="match status" value="1"/>
</dbReference>
<dbReference type="PANTHER" id="PTHR38464:SF1">
    <property type="entry name" value="L-ARABINOSE ISOMERASE"/>
    <property type="match status" value="1"/>
</dbReference>
<dbReference type="Pfam" id="PF24856">
    <property type="entry name" value="AraA_central"/>
    <property type="match status" value="1"/>
</dbReference>
<dbReference type="Pfam" id="PF02610">
    <property type="entry name" value="AraA_N"/>
    <property type="match status" value="1"/>
</dbReference>
<dbReference type="Pfam" id="PF11762">
    <property type="entry name" value="Arabinose_Iso_C"/>
    <property type="match status" value="1"/>
</dbReference>
<dbReference type="PIRSF" id="PIRSF001478">
    <property type="entry name" value="L-ara_isomerase"/>
    <property type="match status" value="1"/>
</dbReference>
<dbReference type="SUPFAM" id="SSF50443">
    <property type="entry name" value="FucI/AraA C-terminal domain-like"/>
    <property type="match status" value="1"/>
</dbReference>
<dbReference type="SUPFAM" id="SSF53743">
    <property type="entry name" value="FucI/AraA N-terminal and middle domains"/>
    <property type="match status" value="1"/>
</dbReference>
<keyword id="KW-0054">Arabinose catabolism</keyword>
<keyword id="KW-0119">Carbohydrate metabolism</keyword>
<keyword id="KW-0413">Isomerase</keyword>
<keyword id="KW-0464">Manganese</keyword>
<keyword id="KW-0479">Metal-binding</keyword>
<reference key="1">
    <citation type="journal article" date="2006" name="J. Bacteriol.">
        <title>Complete genome sequence of Yersinia pestis strains Antiqua and Nepal516: evidence of gene reduction in an emerging pathogen.</title>
        <authorList>
            <person name="Chain P.S.G."/>
            <person name="Hu P."/>
            <person name="Malfatti S.A."/>
            <person name="Radnedge L."/>
            <person name="Larimer F."/>
            <person name="Vergez L.M."/>
            <person name="Worsham P."/>
            <person name="Chu M.C."/>
            <person name="Andersen G.L."/>
        </authorList>
    </citation>
    <scope>NUCLEOTIDE SEQUENCE [LARGE SCALE GENOMIC DNA]</scope>
    <source>
        <strain>Nepal516</strain>
    </source>
</reference>
<reference key="2">
    <citation type="submission" date="2009-04" db="EMBL/GenBank/DDBJ databases">
        <title>Yersinia pestis Nepal516A whole genome shotgun sequencing project.</title>
        <authorList>
            <person name="Plunkett G. III"/>
            <person name="Anderson B.D."/>
            <person name="Baumler D.J."/>
            <person name="Burland V."/>
            <person name="Cabot E.L."/>
            <person name="Glasner J.D."/>
            <person name="Mau B."/>
            <person name="Neeno-Eckwall E."/>
            <person name="Perna N.T."/>
            <person name="Munk A.C."/>
            <person name="Tapia R."/>
            <person name="Green L.D."/>
            <person name="Rogers Y.C."/>
            <person name="Detter J.C."/>
            <person name="Bruce D.C."/>
            <person name="Brettin T.S."/>
        </authorList>
    </citation>
    <scope>NUCLEOTIDE SEQUENCE [LARGE SCALE GENOMIC DNA]</scope>
    <source>
        <strain>Nepal516</strain>
    </source>
</reference>
<accession>Q1CIX9</accession>
<accession>C4GT18</accession>
<feature type="chain" id="PRO_0000259348" description="L-arabinose isomerase">
    <location>
        <begin position="1"/>
        <end position="500"/>
    </location>
</feature>
<feature type="binding site" evidence="1">
    <location>
        <position position="306"/>
    </location>
    <ligand>
        <name>Mn(2+)</name>
        <dbReference type="ChEBI" id="CHEBI:29035"/>
    </ligand>
</feature>
<feature type="binding site" evidence="1">
    <location>
        <position position="333"/>
    </location>
    <ligand>
        <name>Mn(2+)</name>
        <dbReference type="ChEBI" id="CHEBI:29035"/>
    </ligand>
</feature>
<feature type="binding site" evidence="1">
    <location>
        <position position="350"/>
    </location>
    <ligand>
        <name>Mn(2+)</name>
        <dbReference type="ChEBI" id="CHEBI:29035"/>
    </ligand>
</feature>
<feature type="binding site" evidence="1">
    <location>
        <position position="450"/>
    </location>
    <ligand>
        <name>Mn(2+)</name>
        <dbReference type="ChEBI" id="CHEBI:29035"/>
    </ligand>
</feature>
<organism>
    <name type="scientific">Yersinia pestis bv. Antiqua (strain Nepal516)</name>
    <dbReference type="NCBI Taxonomy" id="377628"/>
    <lineage>
        <taxon>Bacteria</taxon>
        <taxon>Pseudomonadati</taxon>
        <taxon>Pseudomonadota</taxon>
        <taxon>Gammaproteobacteria</taxon>
        <taxon>Enterobacterales</taxon>
        <taxon>Yersiniaceae</taxon>
        <taxon>Yersinia</taxon>
    </lineage>
</organism>